<keyword id="KW-0106">Calcium</keyword>
<keyword id="KW-0180">Complement pathway</keyword>
<keyword id="KW-0204">Cytolysis</keyword>
<keyword id="KW-1015">Disulfide bond</keyword>
<keyword id="KW-0245">EGF-like domain</keyword>
<keyword id="KW-0325">Glycoprotein</keyword>
<keyword id="KW-0391">Immunity</keyword>
<keyword id="KW-0399">Innate immunity</keyword>
<keyword id="KW-0472">Membrane</keyword>
<keyword id="KW-0473">Membrane attack complex</keyword>
<keyword id="KW-0479">Metal-binding</keyword>
<keyword id="KW-1185">Reference proteome</keyword>
<keyword id="KW-0677">Repeat</keyword>
<keyword id="KW-0964">Secreted</keyword>
<keyword id="KW-0732">Signal</keyword>
<keyword id="KW-0768">Sushi</keyword>
<keyword id="KW-1052">Target cell membrane</keyword>
<keyword id="KW-1053">Target membrane</keyword>
<keyword id="KW-0812">Transmembrane</keyword>
<keyword id="KW-1134">Transmembrane beta strand</keyword>
<reference key="1">
    <citation type="submission" date="2006-02" db="EMBL/GenBank/DDBJ databases">
        <authorList>
            <consortium name="NIH - Mammalian Gene Collection (MGC) project"/>
        </authorList>
    </citation>
    <scope>NUCLEOTIDE SEQUENCE [LARGE SCALE MRNA]</scope>
    <source>
        <strain>Hereford</strain>
        <tissue>Testis</tissue>
    </source>
</reference>
<evidence type="ECO:0000250" key="1"/>
<evidence type="ECO:0000250" key="2">
    <source>
        <dbReference type="UniProtKB" id="P13671"/>
    </source>
</evidence>
<evidence type="ECO:0000255" key="3"/>
<evidence type="ECO:0000255" key="4">
    <source>
        <dbReference type="PROSITE-ProRule" id="PRU00124"/>
    </source>
</evidence>
<evidence type="ECO:0000255" key="5">
    <source>
        <dbReference type="PROSITE-ProRule" id="PRU00210"/>
    </source>
</evidence>
<evidence type="ECO:0000255" key="6">
    <source>
        <dbReference type="PROSITE-ProRule" id="PRU00302"/>
    </source>
</evidence>
<evidence type="ECO:0000255" key="7">
    <source>
        <dbReference type="PROSITE-ProRule" id="PRU00745"/>
    </source>
</evidence>
<evidence type="ECO:0000255" key="8">
    <source>
        <dbReference type="PROSITE-ProRule" id="PRU00798"/>
    </source>
</evidence>
<evidence type="ECO:0000305" key="9"/>
<accession>Q29RU4</accession>
<protein>
    <recommendedName>
        <fullName>Complement component C6</fullName>
    </recommendedName>
</protein>
<sequence length="932" mass="104541">MARHSVMYFILLSALIDKSQACFCDHYPWSQWSSCSKTCNSGTQTRQRRIVTDKYYFENFCGQLCTKQESRECNWQTCPINCRLGDYGPWSDCDPCVQKRFKVRSILRPSQFGGQPCTEPLMTFQPCIPSKLCKIEEIDCKNKFRCDSGRCIASKLECNGENDCGDNSDERNCGRKKTVCSRSHNPIPGVQLMGMGFHFLAGEPRGEVLDNSFTGGVCRTVKSSRASNPYRVPANLENVNFEVQTKEDDLEADFYDDLIPLEDNKDQEALGSGLATSSFRVPIFYSSKRSQSSSHSSAFKQAIQASQKKASSFIRIHKVIKVLNFTMKTKDLQLSDVFLKALNHLPLEYNSALYSRIFDDFGTHYFTSGSLGGVYDLLYQFSKEELKNSGLTQEEAKNCIRIETKKRFLFVKKTKVEHRCTTNKLSEKYEGSFMQGSEKSISLVQGGRSAYAAALAWEKGSPVPEERVFSDWLESVKENPSVIDFALAPITDLVRNIPCAVTRRNNLRRAFREYAAKFDPCQCARCPNSGRPVLSGTECLCVCQSGTYGENCERRSPDYKSNAVDGNWGCWSSWSSCDATYRRSRTRECNNPAPQQGGKRCEGERRQEEHCTFSIMQNDGQPCISDDEDMKETDLPELESDSGCPQPVPPENGFIRNEKKQYSVGEEVEILCFTGFKAVGYQYFRCLPDRSWRQGDVECQRTECLKPIVPEGLTLSPFQTLYKIGDSIELTCPRGLVVNGPSRYTCSGDSWTPPISDSLSCEKDVLTGLRGHCQPGQKQLGSECVCMSPEEDCGHYSEEICVLDTTSSDYFTSSACKLLAEKCLNNQQLHFVHIGSCEEGPQLKWGLERIKLSSSSTKNESCGYDTCYNWEKCSATTSKCVCLLPSQCTKGGDQLFCVQIGSSANGKTMNICEVGAVKCAKREMEILHSGRC</sequence>
<organism>
    <name type="scientific">Bos taurus</name>
    <name type="common">Bovine</name>
    <dbReference type="NCBI Taxonomy" id="9913"/>
    <lineage>
        <taxon>Eukaryota</taxon>
        <taxon>Metazoa</taxon>
        <taxon>Chordata</taxon>
        <taxon>Craniata</taxon>
        <taxon>Vertebrata</taxon>
        <taxon>Euteleostomi</taxon>
        <taxon>Mammalia</taxon>
        <taxon>Eutheria</taxon>
        <taxon>Laurasiatheria</taxon>
        <taxon>Artiodactyla</taxon>
        <taxon>Ruminantia</taxon>
        <taxon>Pecora</taxon>
        <taxon>Bovidae</taxon>
        <taxon>Bovinae</taxon>
        <taxon>Bos</taxon>
    </lineage>
</organism>
<feature type="signal peptide" evidence="3">
    <location>
        <begin position="1"/>
        <end position="21"/>
    </location>
</feature>
<feature type="chain" id="PRO_0000254014" description="Complement component C6">
    <location>
        <begin position="22"/>
        <end position="932"/>
    </location>
</feature>
<feature type="transmembrane region" description="Beta stranded" evidence="2">
    <location>
        <begin position="278"/>
        <end position="290"/>
    </location>
</feature>
<feature type="transmembrane region" description="Beta stranded" evidence="2">
    <location>
        <begin position="402"/>
        <end position="415"/>
    </location>
</feature>
<feature type="domain" description="TSP type-1 1" evidence="5">
    <location>
        <begin position="22"/>
        <end position="79"/>
    </location>
</feature>
<feature type="domain" description="TSP type-1 2" evidence="5">
    <location>
        <begin position="81"/>
        <end position="134"/>
    </location>
</feature>
<feature type="domain" description="LDL-receptor class A" evidence="4">
    <location>
        <begin position="139"/>
        <end position="174"/>
    </location>
</feature>
<feature type="domain" description="MACPF" evidence="7">
    <location>
        <begin position="176"/>
        <end position="522"/>
    </location>
</feature>
<feature type="domain" description="EGF-like">
    <location>
        <begin position="523"/>
        <end position="553"/>
    </location>
</feature>
<feature type="domain" description="TSP type-1 3" evidence="5">
    <location>
        <begin position="565"/>
        <end position="612"/>
    </location>
</feature>
<feature type="domain" description="Sushi 1" evidence="6">
    <location>
        <begin position="642"/>
        <end position="701"/>
    </location>
</feature>
<feature type="domain" description="Sushi 2" evidence="6">
    <location>
        <begin position="702"/>
        <end position="763"/>
    </location>
</feature>
<feature type="domain" description="Kazal-like 1" evidence="8">
    <location>
        <begin position="780"/>
        <end position="839"/>
    </location>
</feature>
<feature type="domain" description="Kazal-like 2" evidence="8">
    <location>
        <begin position="876"/>
        <end position="932"/>
    </location>
</feature>
<feature type="region of interest" description="CCP 1">
    <location>
        <begin position="611"/>
        <end position="688"/>
    </location>
</feature>
<feature type="region of interest" description="C5b-binding domain" evidence="1">
    <location>
        <begin position="642"/>
        <end position="932"/>
    </location>
</feature>
<feature type="region of interest" description="CCP 2">
    <location>
        <begin position="689"/>
        <end position="765"/>
    </location>
</feature>
<feature type="region of interest" description="Factor I module (FIM) 1">
    <location>
        <begin position="766"/>
        <end position="840"/>
    </location>
</feature>
<feature type="region of interest" description="Factor I module (FIM) 2">
    <location>
        <begin position="858"/>
        <end position="932"/>
    </location>
</feature>
<feature type="binding site" evidence="2">
    <location>
        <position position="156"/>
    </location>
    <ligand>
        <name>Ca(2+)</name>
        <dbReference type="ChEBI" id="CHEBI:29108"/>
    </ligand>
</feature>
<feature type="binding site" evidence="2">
    <location>
        <position position="159"/>
    </location>
    <ligand>
        <name>Ca(2+)</name>
        <dbReference type="ChEBI" id="CHEBI:29108"/>
    </ligand>
</feature>
<feature type="binding site" evidence="2">
    <location>
        <position position="161"/>
    </location>
    <ligand>
        <name>Ca(2+)</name>
        <dbReference type="ChEBI" id="CHEBI:29108"/>
    </ligand>
</feature>
<feature type="binding site" evidence="2">
    <location>
        <position position="163"/>
    </location>
    <ligand>
        <name>Ca(2+)</name>
        <dbReference type="ChEBI" id="CHEBI:29108"/>
    </ligand>
</feature>
<feature type="binding site" evidence="2">
    <location>
        <position position="169"/>
    </location>
    <ligand>
        <name>Ca(2+)</name>
        <dbReference type="ChEBI" id="CHEBI:29108"/>
    </ligand>
</feature>
<feature type="binding site" evidence="2">
    <location>
        <position position="170"/>
    </location>
    <ligand>
        <name>Ca(2+)</name>
        <dbReference type="ChEBI" id="CHEBI:29108"/>
    </ligand>
</feature>
<feature type="glycosylation site" description="C-linked (Man) tryptophan" evidence="2">
    <location>
        <position position="29"/>
    </location>
</feature>
<feature type="glycosylation site" description="C-linked (Man) tryptophan" evidence="2">
    <location>
        <position position="32"/>
    </location>
</feature>
<feature type="glycosylation site" description="O-linked (Fuc...) threonine" evidence="2">
    <location>
        <position position="38"/>
    </location>
</feature>
<feature type="glycosylation site" description="C-linked (Man) tryptophan" evidence="2">
    <location>
        <position position="90"/>
    </location>
</feature>
<feature type="glycosylation site" description="N-linked (GlcNAc...) asparagine" evidence="3">
    <location>
        <position position="324"/>
    </location>
</feature>
<feature type="glycosylation site" description="O-linked (Fuc...) threonine" evidence="2">
    <location>
        <position position="392"/>
    </location>
</feature>
<feature type="glycosylation site" description="C-linked (Man) tryptophan" evidence="2">
    <location>
        <position position="568"/>
    </location>
</feature>
<feature type="glycosylation site" description="C-linked (Man) tryptophan" evidence="2">
    <location>
        <position position="571"/>
    </location>
</feature>
<feature type="glycosylation site" description="C-linked (Man) tryptophan" evidence="2">
    <location>
        <position position="574"/>
    </location>
</feature>
<feature type="glycosylation site" description="N-linked (GlcNAc...) asparagine" evidence="3">
    <location>
        <position position="859"/>
    </location>
</feature>
<feature type="disulfide bond" evidence="2">
    <location>
        <begin position="22"/>
        <end position="61"/>
    </location>
</feature>
<feature type="disulfide bond" evidence="2">
    <location>
        <begin position="24"/>
        <end position="65"/>
    </location>
</feature>
<feature type="disulfide bond" evidence="2">
    <location>
        <begin position="35"/>
        <end position="73"/>
    </location>
</feature>
<feature type="disulfide bond" evidence="2">
    <location>
        <begin position="39"/>
        <end position="78"/>
    </location>
</feature>
<feature type="disulfide bond" evidence="2">
    <location>
        <begin position="82"/>
        <end position="117"/>
    </location>
</feature>
<feature type="disulfide bond" evidence="2">
    <location>
        <begin position="93"/>
        <end position="127"/>
    </location>
</feature>
<feature type="disulfide bond" evidence="2">
    <location>
        <begin position="96"/>
        <end position="133"/>
    </location>
</feature>
<feature type="disulfide bond" evidence="2">
    <location>
        <begin position="140"/>
        <end position="151"/>
    </location>
</feature>
<feature type="disulfide bond" evidence="2">
    <location>
        <begin position="146"/>
        <end position="164"/>
    </location>
</feature>
<feature type="disulfide bond" evidence="2">
    <location>
        <begin position="158"/>
        <end position="173"/>
    </location>
</feature>
<feature type="disulfide bond" evidence="2">
    <location>
        <begin position="180"/>
        <end position="218"/>
    </location>
</feature>
<feature type="disulfide bond" evidence="2">
    <location>
        <begin position="399"/>
        <end position="420"/>
    </location>
</feature>
<feature type="disulfide bond" evidence="2">
    <location>
        <begin position="499"/>
        <end position="623"/>
    </location>
</feature>
<feature type="disulfide bond" evidence="2">
    <location>
        <begin position="521"/>
        <end position="570"/>
    </location>
</feature>
<feature type="disulfide bond" evidence="2">
    <location>
        <begin position="523"/>
        <end position="539"/>
    </location>
</feature>
<feature type="disulfide bond" evidence="2">
    <location>
        <begin position="526"/>
        <end position="541"/>
    </location>
</feature>
<feature type="disulfide bond" evidence="2">
    <location>
        <begin position="543"/>
        <end position="552"/>
    </location>
</feature>
<feature type="disulfide bond" evidence="2">
    <location>
        <begin position="577"/>
        <end position="611"/>
    </location>
</feature>
<feature type="disulfide bond" evidence="2">
    <location>
        <begin position="589"/>
        <end position="601"/>
    </location>
</feature>
<feature type="disulfide bond" evidence="2">
    <location>
        <begin position="644"/>
        <end position="686"/>
    </location>
</feature>
<feature type="disulfide bond" evidence="2">
    <location>
        <begin position="672"/>
        <end position="699"/>
    </location>
</feature>
<feature type="disulfide bond" evidence="2">
    <location>
        <begin position="704"/>
        <end position="746"/>
    </location>
</feature>
<feature type="disulfide bond" evidence="2">
    <location>
        <begin position="732"/>
        <end position="761"/>
    </location>
</feature>
<feature type="disulfide bond" evidence="2">
    <location>
        <begin position="773"/>
        <end position="823"/>
    </location>
</feature>
<feature type="disulfide bond" evidence="2">
    <location>
        <begin position="784"/>
        <end position="801"/>
    </location>
</feature>
<feature type="disulfide bond" evidence="2">
    <location>
        <begin position="786"/>
        <end position="837"/>
    </location>
</feature>
<feature type="disulfide bond" evidence="2">
    <location>
        <begin position="793"/>
        <end position="816"/>
    </location>
</feature>
<feature type="disulfide bond" evidence="2">
    <location>
        <begin position="862"/>
        <end position="873"/>
    </location>
</feature>
<feature type="disulfide bond" evidence="2">
    <location>
        <begin position="867"/>
        <end position="919"/>
    </location>
</feature>
<feature type="disulfide bond" evidence="2">
    <location>
        <begin position="880"/>
        <end position="897"/>
    </location>
</feature>
<feature type="disulfide bond" evidence="2">
    <location>
        <begin position="882"/>
        <end position="932"/>
    </location>
</feature>
<feature type="disulfide bond" evidence="2">
    <location>
        <begin position="888"/>
        <end position="912"/>
    </location>
</feature>
<proteinExistence type="evidence at transcript level"/>
<name>CO6_BOVIN</name>
<dbReference type="EMBL" id="BC114014">
    <property type="protein sequence ID" value="AAI14015.1"/>
    <property type="molecule type" value="mRNA"/>
</dbReference>
<dbReference type="RefSeq" id="NP_001039444.1">
    <property type="nucleotide sequence ID" value="NM_001045979.1"/>
</dbReference>
<dbReference type="SMR" id="Q29RU4"/>
<dbReference type="FunCoup" id="Q29RU4">
    <property type="interactions" value="236"/>
</dbReference>
<dbReference type="STRING" id="9913.ENSBTAP00000057883"/>
<dbReference type="GlyCosmos" id="Q29RU4">
    <property type="glycosylation" value="10 sites, No reported glycans"/>
</dbReference>
<dbReference type="GlyGen" id="Q29RU4">
    <property type="glycosylation" value="10 sites"/>
</dbReference>
<dbReference type="PaxDb" id="9913-ENSBTAP00000018845"/>
<dbReference type="GeneID" id="507749"/>
<dbReference type="KEGG" id="bta:507749"/>
<dbReference type="CTD" id="729"/>
<dbReference type="eggNOG" id="ENOG502QPIM">
    <property type="taxonomic scope" value="Eukaryota"/>
</dbReference>
<dbReference type="InParanoid" id="Q29RU4"/>
<dbReference type="OrthoDB" id="9867095at2759"/>
<dbReference type="Proteomes" id="UP000009136">
    <property type="component" value="Unplaced"/>
</dbReference>
<dbReference type="GO" id="GO:0005615">
    <property type="term" value="C:extracellular space"/>
    <property type="evidence" value="ECO:0000318"/>
    <property type="project" value="GO_Central"/>
</dbReference>
<dbReference type="GO" id="GO:0005579">
    <property type="term" value="C:membrane attack complex"/>
    <property type="evidence" value="ECO:0000318"/>
    <property type="project" value="GO_Central"/>
</dbReference>
<dbReference type="GO" id="GO:0006956">
    <property type="term" value="P:complement activation"/>
    <property type="evidence" value="ECO:0000318"/>
    <property type="project" value="GO_Central"/>
</dbReference>
<dbReference type="GO" id="GO:0006958">
    <property type="term" value="P:complement activation, classical pathway"/>
    <property type="evidence" value="ECO:0007669"/>
    <property type="project" value="UniProtKB-KW"/>
</dbReference>
<dbReference type="GO" id="GO:0045087">
    <property type="term" value="P:innate immune response"/>
    <property type="evidence" value="ECO:0007669"/>
    <property type="project" value="UniProtKB-KW"/>
</dbReference>
<dbReference type="GO" id="GO:0031640">
    <property type="term" value="P:killing of cells of another organism"/>
    <property type="evidence" value="ECO:0007669"/>
    <property type="project" value="UniProtKB-KW"/>
</dbReference>
<dbReference type="CDD" id="cd00033">
    <property type="entry name" value="CCP"/>
    <property type="match status" value="2"/>
</dbReference>
<dbReference type="CDD" id="cd00112">
    <property type="entry name" value="LDLa"/>
    <property type="match status" value="1"/>
</dbReference>
<dbReference type="FunFam" id="4.10.400.10:FF:000065">
    <property type="entry name" value="Transmembrane protease serine 7"/>
    <property type="match status" value="1"/>
</dbReference>
<dbReference type="FunFam" id="2.20.100.10:FF:000002">
    <property type="entry name" value="Unc-5 netrin receptor C"/>
    <property type="match status" value="1"/>
</dbReference>
<dbReference type="Gene3D" id="3.30.60.30">
    <property type="match status" value="2"/>
</dbReference>
<dbReference type="Gene3D" id="2.10.70.10">
    <property type="entry name" value="Complement Module, domain 1"/>
    <property type="match status" value="2"/>
</dbReference>
<dbReference type="Gene3D" id="4.10.400.10">
    <property type="entry name" value="Low-density Lipoprotein Receptor"/>
    <property type="match status" value="1"/>
</dbReference>
<dbReference type="Gene3D" id="2.20.100.10">
    <property type="entry name" value="Thrombospondin type-1 (TSP1) repeat"/>
    <property type="match status" value="3"/>
</dbReference>
<dbReference type="InterPro" id="IPR048828">
    <property type="entry name" value="C6_KAZAL"/>
</dbReference>
<dbReference type="InterPro" id="IPR048831">
    <property type="entry name" value="C8A_B_C6_EGF-like"/>
</dbReference>
<dbReference type="InterPro" id="IPR003884">
    <property type="entry name" value="FacI_MAC"/>
</dbReference>
<dbReference type="InterPro" id="IPR002350">
    <property type="entry name" value="Kazal_dom"/>
</dbReference>
<dbReference type="InterPro" id="IPR036055">
    <property type="entry name" value="LDL_receptor-like_sf"/>
</dbReference>
<dbReference type="InterPro" id="IPR023415">
    <property type="entry name" value="LDLR_class-A_CS"/>
</dbReference>
<dbReference type="InterPro" id="IPR002172">
    <property type="entry name" value="LDrepeatLR_classA_rpt"/>
</dbReference>
<dbReference type="InterPro" id="IPR001862">
    <property type="entry name" value="MAC_perforin"/>
</dbReference>
<dbReference type="InterPro" id="IPR020864">
    <property type="entry name" value="MACPF"/>
</dbReference>
<dbReference type="InterPro" id="IPR020863">
    <property type="entry name" value="MACPF_CS"/>
</dbReference>
<dbReference type="InterPro" id="IPR035976">
    <property type="entry name" value="Sushi/SCR/CCP_sf"/>
</dbReference>
<dbReference type="InterPro" id="IPR000436">
    <property type="entry name" value="Sushi_SCR_CCP_dom"/>
</dbReference>
<dbReference type="InterPro" id="IPR000884">
    <property type="entry name" value="TSP1_rpt"/>
</dbReference>
<dbReference type="InterPro" id="IPR036383">
    <property type="entry name" value="TSP1_rpt_sf"/>
</dbReference>
<dbReference type="PANTHER" id="PTHR45742">
    <property type="entry name" value="COMPLEMENT COMPONENT C6"/>
    <property type="match status" value="1"/>
</dbReference>
<dbReference type="PANTHER" id="PTHR45742:SF4">
    <property type="entry name" value="COMPLEMENT COMPONENT C6"/>
    <property type="match status" value="1"/>
</dbReference>
<dbReference type="Pfam" id="PF21195">
    <property type="entry name" value="EGF_C8A_B_C6"/>
    <property type="match status" value="1"/>
</dbReference>
<dbReference type="Pfam" id="PF21288">
    <property type="entry name" value="Kazal_C6"/>
    <property type="match status" value="1"/>
</dbReference>
<dbReference type="Pfam" id="PF00057">
    <property type="entry name" value="Ldl_recept_a"/>
    <property type="match status" value="1"/>
</dbReference>
<dbReference type="Pfam" id="PF01823">
    <property type="entry name" value="MACPF"/>
    <property type="match status" value="1"/>
</dbReference>
<dbReference type="Pfam" id="PF00084">
    <property type="entry name" value="Sushi"/>
    <property type="match status" value="2"/>
</dbReference>
<dbReference type="Pfam" id="PF00090">
    <property type="entry name" value="TSP_1"/>
    <property type="match status" value="3"/>
</dbReference>
<dbReference type="PRINTS" id="PR00764">
    <property type="entry name" value="COMPLEMENTC9"/>
</dbReference>
<dbReference type="SMART" id="SM00032">
    <property type="entry name" value="CCP"/>
    <property type="match status" value="2"/>
</dbReference>
<dbReference type="SMART" id="SM00057">
    <property type="entry name" value="FIMAC"/>
    <property type="match status" value="2"/>
</dbReference>
<dbReference type="SMART" id="SM00192">
    <property type="entry name" value="LDLa"/>
    <property type="match status" value="1"/>
</dbReference>
<dbReference type="SMART" id="SM00457">
    <property type="entry name" value="MACPF"/>
    <property type="match status" value="1"/>
</dbReference>
<dbReference type="SMART" id="SM00209">
    <property type="entry name" value="TSP1"/>
    <property type="match status" value="3"/>
</dbReference>
<dbReference type="SUPFAM" id="SSF57535">
    <property type="entry name" value="Complement control module/SCR domain"/>
    <property type="match status" value="2"/>
</dbReference>
<dbReference type="SUPFAM" id="SSF57424">
    <property type="entry name" value="LDL receptor-like module"/>
    <property type="match status" value="1"/>
</dbReference>
<dbReference type="SUPFAM" id="SSF82895">
    <property type="entry name" value="TSP-1 type 1 repeat"/>
    <property type="match status" value="3"/>
</dbReference>
<dbReference type="PROSITE" id="PS00022">
    <property type="entry name" value="EGF_1"/>
    <property type="match status" value="1"/>
</dbReference>
<dbReference type="PROSITE" id="PS51465">
    <property type="entry name" value="KAZAL_2"/>
    <property type="match status" value="2"/>
</dbReference>
<dbReference type="PROSITE" id="PS01209">
    <property type="entry name" value="LDLRA_1"/>
    <property type="match status" value="1"/>
</dbReference>
<dbReference type="PROSITE" id="PS50068">
    <property type="entry name" value="LDLRA_2"/>
    <property type="match status" value="1"/>
</dbReference>
<dbReference type="PROSITE" id="PS00279">
    <property type="entry name" value="MACPF_1"/>
    <property type="match status" value="1"/>
</dbReference>
<dbReference type="PROSITE" id="PS51412">
    <property type="entry name" value="MACPF_2"/>
    <property type="match status" value="1"/>
</dbReference>
<dbReference type="PROSITE" id="PS50923">
    <property type="entry name" value="SUSHI"/>
    <property type="match status" value="2"/>
</dbReference>
<dbReference type="PROSITE" id="PS50092">
    <property type="entry name" value="TSP1"/>
    <property type="match status" value="3"/>
</dbReference>
<comment type="function">
    <text evidence="2">Component of the membrane attack complex (MAC), a multiprotein complex activated by the complement cascade, which inserts into a target cell membrane and forms a pore, leading to target cell membrane rupture and cell lysis. The MAC is initiated by proteolytic cleavage of C5 into complement C5b in response to the classical, alternative, lectin and GZMK complement pathways. The complement pathways consist in a cascade of proteins that leads to phagocytosis and breakdown of pathogens and signaling that strengthens the adaptive immune system. Together with component C5b, involved in MAC complex assembly: complement C5b and C6 associate with the outer leaflet of target cell membrane, reducing the energy for membrane bending.</text>
</comment>
<comment type="activity regulation">
    <text evidence="2">Membrane attack complex (MAC) assembly is inhibited by CD59, thereby protecting self-cells from damage during complement activation. MAC assembly is also inhibited by clusterin (CLU) chaperones that inhibit polymerization of C9.</text>
</comment>
<comment type="subunit">
    <text evidence="2">Component of the membrane attack complex (MAC), composed of complement C5b, C6, C7, C8A, C8B, C8G and multiple copies of the pore-forming subunit C9.</text>
</comment>
<comment type="subcellular location">
    <subcellularLocation>
        <location evidence="2">Secreted</location>
    </subcellularLocation>
    <subcellularLocation>
        <location evidence="2">Target cell membrane</location>
        <topology evidence="2">Multi-pass membrane protein</topology>
    </subcellularLocation>
    <text evidence="2">Secreted as soluble protein. Inserts into the cell membrane of target cells.</text>
</comment>
<comment type="PTM">
    <text evidence="2">All cysteine residues are assumed to be cross-linked to one another. Individual modules containing an even number of conserved cysteine residues are supposed to have disulfide linkages only within the same module.</text>
</comment>
<comment type="similarity">
    <text evidence="9">Belongs to the complement C6/C7/C8/C9 family.</text>
</comment>
<gene>
    <name type="primary">C6</name>
</gene>